<proteinExistence type="inferred from homology"/>
<organism>
    <name type="scientific">Yersinia pestis</name>
    <dbReference type="NCBI Taxonomy" id="632"/>
    <lineage>
        <taxon>Bacteria</taxon>
        <taxon>Pseudomonadati</taxon>
        <taxon>Pseudomonadota</taxon>
        <taxon>Gammaproteobacteria</taxon>
        <taxon>Enterobacterales</taxon>
        <taxon>Yersiniaceae</taxon>
        <taxon>Yersinia</taxon>
    </lineage>
</organism>
<comment type="function">
    <text evidence="1">This protein is involved in control of the biosynthesis of threonine.</text>
</comment>
<comment type="similarity">
    <text evidence="1">Belongs to the thr operon leader peptide family.</text>
</comment>
<comment type="sequence caution" evidence="2">
    <conflict type="erroneous initiation">
        <sequence resource="EMBL-CDS" id="AAM87267"/>
    </conflict>
</comment>
<sequence>MRYISLNTTIITTTETTGYGAG</sequence>
<protein>
    <recommendedName>
        <fullName evidence="1">thr operon leader peptide</fullName>
    </recommendedName>
    <alternativeName>
        <fullName evidence="1">thr operon attenuator</fullName>
    </alternativeName>
</protein>
<evidence type="ECO:0000255" key="1">
    <source>
        <dbReference type="HAMAP-Rule" id="MF_01907"/>
    </source>
</evidence>
<evidence type="ECO:0000305" key="2"/>
<feature type="peptide" id="PRO_0000312897" description="thr operon leader peptide">
    <location>
        <begin position="1"/>
        <end position="22"/>
    </location>
</feature>
<accession>Q8CKC6</accession>
<reference key="1">
    <citation type="journal article" date="2001" name="Nature">
        <title>Genome sequence of Yersinia pestis, the causative agent of plague.</title>
        <authorList>
            <person name="Parkhill J."/>
            <person name="Wren B.W."/>
            <person name="Thomson N.R."/>
            <person name="Titball R.W."/>
            <person name="Holden M.T.G."/>
            <person name="Prentice M.B."/>
            <person name="Sebaihia M."/>
            <person name="James K.D."/>
            <person name="Churcher C.M."/>
            <person name="Mungall K.L."/>
            <person name="Baker S."/>
            <person name="Basham D."/>
            <person name="Bentley S.D."/>
            <person name="Brooks K."/>
            <person name="Cerdeno-Tarraga A.-M."/>
            <person name="Chillingworth T."/>
            <person name="Cronin A."/>
            <person name="Davies R.M."/>
            <person name="Davis P."/>
            <person name="Dougan G."/>
            <person name="Feltwell T."/>
            <person name="Hamlin N."/>
            <person name="Holroyd S."/>
            <person name="Jagels K."/>
            <person name="Karlyshev A.V."/>
            <person name="Leather S."/>
            <person name="Moule S."/>
            <person name="Oyston P.C.F."/>
            <person name="Quail M.A."/>
            <person name="Rutherford K.M."/>
            <person name="Simmonds M."/>
            <person name="Skelton J."/>
            <person name="Stevens K."/>
            <person name="Whitehead S."/>
            <person name="Barrell B.G."/>
        </authorList>
    </citation>
    <scope>NUCLEOTIDE SEQUENCE [LARGE SCALE GENOMIC DNA]</scope>
    <source>
        <strain>CO-92 / Biovar Orientalis</strain>
    </source>
</reference>
<reference key="2">
    <citation type="journal article" date="2002" name="J. Bacteriol.">
        <title>Genome sequence of Yersinia pestis KIM.</title>
        <authorList>
            <person name="Deng W."/>
            <person name="Burland V."/>
            <person name="Plunkett G. III"/>
            <person name="Boutin A."/>
            <person name="Mayhew G.F."/>
            <person name="Liss P."/>
            <person name="Perna N.T."/>
            <person name="Rose D.J."/>
            <person name="Mau B."/>
            <person name="Zhou S."/>
            <person name="Schwartz D.C."/>
            <person name="Fetherston J.D."/>
            <person name="Lindler L.E."/>
            <person name="Brubaker R.R."/>
            <person name="Plano G.V."/>
            <person name="Straley S.C."/>
            <person name="McDonough K.A."/>
            <person name="Nilles M.L."/>
            <person name="Matson J.S."/>
            <person name="Blattner F.R."/>
            <person name="Perry R.D."/>
        </authorList>
    </citation>
    <scope>NUCLEOTIDE SEQUENCE [LARGE SCALE GENOMIC DNA]</scope>
    <source>
        <strain>KIM10+ / Biovar Mediaevalis</strain>
    </source>
</reference>
<reference key="3">
    <citation type="journal article" date="2004" name="DNA Res.">
        <title>Complete genome sequence of Yersinia pestis strain 91001, an isolate avirulent to humans.</title>
        <authorList>
            <person name="Song Y."/>
            <person name="Tong Z."/>
            <person name="Wang J."/>
            <person name="Wang L."/>
            <person name="Guo Z."/>
            <person name="Han Y."/>
            <person name="Zhang J."/>
            <person name="Pei D."/>
            <person name="Zhou D."/>
            <person name="Qin H."/>
            <person name="Pang X."/>
            <person name="Han Y."/>
            <person name="Zhai J."/>
            <person name="Li M."/>
            <person name="Cui B."/>
            <person name="Qi Z."/>
            <person name="Jin L."/>
            <person name="Dai R."/>
            <person name="Chen F."/>
            <person name="Li S."/>
            <person name="Ye C."/>
            <person name="Du Z."/>
            <person name="Lin W."/>
            <person name="Wang J."/>
            <person name="Yu J."/>
            <person name="Yang H."/>
            <person name="Wang J."/>
            <person name="Huang P."/>
            <person name="Yang R."/>
        </authorList>
    </citation>
    <scope>NUCLEOTIDE SEQUENCE [LARGE SCALE GENOMIC DNA]</scope>
    <source>
        <strain>91001 / Biovar Mediaevalis</strain>
    </source>
</reference>
<dbReference type="EMBL" id="AL590842">
    <property type="status" value="NOT_ANNOTATED_CDS"/>
    <property type="molecule type" value="Genomic_DNA"/>
</dbReference>
<dbReference type="EMBL" id="AE009952">
    <property type="protein sequence ID" value="AAM87267.1"/>
    <property type="status" value="ALT_INIT"/>
    <property type="molecule type" value="Genomic_DNA"/>
</dbReference>
<dbReference type="EMBL" id="AE017042">
    <property type="status" value="NOT_ANNOTATED_CDS"/>
    <property type="molecule type" value="Genomic_DNA"/>
</dbReference>
<dbReference type="RefSeq" id="WP_002231504.1">
    <property type="nucleotide sequence ID" value="NZ_WUCM01000002.1"/>
</dbReference>
<dbReference type="IntAct" id="Q8CKC6">
    <property type="interactions" value="1"/>
</dbReference>
<dbReference type="GeneID" id="96666390"/>
<dbReference type="KEGG" id="ypk:y3719"/>
<dbReference type="HOGENOM" id="CLU_221491_1_0_6"/>
<dbReference type="Proteomes" id="UP000000815">
    <property type="component" value="Chromosome"/>
</dbReference>
<dbReference type="Proteomes" id="UP000001019">
    <property type="component" value="Chromosome"/>
</dbReference>
<dbReference type="Proteomes" id="UP000002490">
    <property type="component" value="Chromosome"/>
</dbReference>
<dbReference type="GO" id="GO:0009088">
    <property type="term" value="P:threonine biosynthetic process"/>
    <property type="evidence" value="ECO:0007669"/>
    <property type="project" value="UniProtKB-UniRule"/>
</dbReference>
<dbReference type="GO" id="GO:0031556">
    <property type="term" value="P:transcriptional attenuation by ribosome"/>
    <property type="evidence" value="ECO:0007669"/>
    <property type="project" value="UniProtKB-UniRule"/>
</dbReference>
<dbReference type="HAMAP" id="MF_01907">
    <property type="entry name" value="Leader_Thr"/>
    <property type="match status" value="1"/>
</dbReference>
<dbReference type="InterPro" id="IPR011720">
    <property type="entry name" value="Thr_lead_pept"/>
</dbReference>
<dbReference type="NCBIfam" id="TIGR02077">
    <property type="entry name" value="thr_lead_pep"/>
    <property type="match status" value="1"/>
</dbReference>
<dbReference type="Pfam" id="PF08254">
    <property type="entry name" value="Leader_Thr"/>
    <property type="match status" value="1"/>
</dbReference>
<gene>
    <name evidence="1" type="primary">thrL</name>
    <name type="ordered locus">YPO0458.1</name>
    <name type="ordered locus">y3719</name>
    <name type="ordered locus">YP_3723.1</name>
</gene>
<keyword id="KW-0028">Amino-acid biosynthesis</keyword>
<keyword id="KW-0428">Leader peptide</keyword>
<keyword id="KW-1185">Reference proteome</keyword>
<keyword id="KW-0791">Threonine biosynthesis</keyword>
<name>LPT_YERPE</name>